<comment type="function">
    <text evidence="2 3">Involved in the biosynthesis of methoxymycolic acid. It catalyzes the O-methylation of the hydroxy group of the hydroxymycolate to form a methyl ether.</text>
</comment>
<comment type="pathway">
    <text>Lipid metabolism; mycolic acid biosynthesis.</text>
</comment>
<comment type="similarity">
    <text evidence="4">Belongs to the CFA/CMAS family.</text>
</comment>
<evidence type="ECO:0000250" key="1"/>
<evidence type="ECO:0000269" key="2">
    <source>
    </source>
</evidence>
<evidence type="ECO:0000269" key="3">
    <source>
    </source>
</evidence>
<evidence type="ECO:0000305" key="4"/>
<sequence>MSDNSTGTTKSRSNVDDVQAHYDLSDAFFALFQDPTRTYSCAYFERDDMTLHEAQVAKLDLTLGKLGLEPGMTLLDVGCGWGSVMKRAVERYDVNVVGLTLSKNQHAYCQQVLDKVDTNRSHRVLLSDWANFSEPVDRIVTIEAIEHFGFERYDDFFKFAYNAMPADGVMLLHSITGLHVKQVIERGIPLTMEMAKFIRFIVTDIFPGGRLPTIETIEEHVTKAGFTITDIQSLQPHFARTLDLWAEALQAHKDEAIEIQSAEVYERYMKYLTGCAKAFRMGYIDCNQFTLAK</sequence>
<feature type="chain" id="PRO_0000398362" description="Methoxy mycolic acid synthase MmaA3">
    <location>
        <begin position="1"/>
        <end position="293"/>
    </location>
</feature>
<feature type="active site" evidence="1">
    <location>
        <position position="275"/>
    </location>
</feature>
<feature type="binding site" evidence="1">
    <location>
        <begin position="39"/>
        <end position="40"/>
    </location>
    <ligand>
        <name>S-adenosyl-L-methionine</name>
        <dbReference type="ChEBI" id="CHEBI:59789"/>
    </ligand>
</feature>
<feature type="binding site" evidence="1">
    <location>
        <begin position="78"/>
        <end position="80"/>
    </location>
    <ligand>
        <name>S-adenosyl-L-methionine</name>
        <dbReference type="ChEBI" id="CHEBI:59789"/>
    </ligand>
</feature>
<feature type="binding site" evidence="1">
    <location>
        <begin position="100"/>
        <end position="105"/>
    </location>
    <ligand>
        <name>S-adenosyl-L-methionine</name>
        <dbReference type="ChEBI" id="CHEBI:59789"/>
    </ligand>
</feature>
<feature type="binding site" evidence="1">
    <location>
        <begin position="129"/>
        <end position="130"/>
    </location>
    <ligand>
        <name>S-adenosyl-L-methionine</name>
        <dbReference type="ChEBI" id="CHEBI:59789"/>
    </ligand>
</feature>
<feature type="binding site" evidence="1">
    <location>
        <position position="142"/>
    </location>
    <ligand>
        <name>S-adenosyl-L-methionine</name>
        <dbReference type="ChEBI" id="CHEBI:59789"/>
    </ligand>
</feature>
<feature type="mutagenesis site" description="Loss of O-methyltransferase activity." evidence="2">
    <original>G</original>
    <variation>D</variation>
    <location>
        <position position="98"/>
    </location>
</feature>
<dbReference type="EC" id="2.1.1.-"/>
<dbReference type="EMBL" id="AL123456">
    <property type="protein sequence ID" value="CCP43386.1"/>
    <property type="molecule type" value="Genomic_DNA"/>
</dbReference>
<dbReference type="PIR" id="H70613">
    <property type="entry name" value="H70613"/>
</dbReference>
<dbReference type="RefSeq" id="NP_215157.1">
    <property type="nucleotide sequence ID" value="NC_000962.3"/>
</dbReference>
<dbReference type="RefSeq" id="WP_003403302.1">
    <property type="nucleotide sequence ID" value="NZ_NVQJ01000007.1"/>
</dbReference>
<dbReference type="SMR" id="P0CH91"/>
<dbReference type="FunCoup" id="P0CH91">
    <property type="interactions" value="7"/>
</dbReference>
<dbReference type="STRING" id="83332.Rv0643c"/>
<dbReference type="PaxDb" id="83332-Rv0643c"/>
<dbReference type="GeneID" id="45424603"/>
<dbReference type="GeneID" id="888058"/>
<dbReference type="KEGG" id="mtu:Rv0643c"/>
<dbReference type="KEGG" id="mtv:RVBD_0643c"/>
<dbReference type="TubercuList" id="Rv0643c"/>
<dbReference type="eggNOG" id="COG2230">
    <property type="taxonomic scope" value="Bacteria"/>
</dbReference>
<dbReference type="InParanoid" id="P0CH91"/>
<dbReference type="OrthoDB" id="9782855at2"/>
<dbReference type="PhylomeDB" id="P0CH91"/>
<dbReference type="UniPathway" id="UPA00915"/>
<dbReference type="Proteomes" id="UP000001584">
    <property type="component" value="Chromosome"/>
</dbReference>
<dbReference type="GO" id="GO:0005886">
    <property type="term" value="C:plasma membrane"/>
    <property type="evidence" value="ECO:0007005"/>
    <property type="project" value="MTBBASE"/>
</dbReference>
<dbReference type="GO" id="GO:0008825">
    <property type="term" value="F:cyclopropane-fatty-acyl-phospholipid synthase activity"/>
    <property type="evidence" value="ECO:0000318"/>
    <property type="project" value="GO_Central"/>
</dbReference>
<dbReference type="GO" id="GO:0008171">
    <property type="term" value="F:O-methyltransferase activity"/>
    <property type="evidence" value="ECO:0000315"/>
    <property type="project" value="UniProtKB"/>
</dbReference>
<dbReference type="GO" id="GO:0008610">
    <property type="term" value="P:lipid biosynthetic process"/>
    <property type="evidence" value="ECO:0000318"/>
    <property type="project" value="GO_Central"/>
</dbReference>
<dbReference type="GO" id="GO:0032259">
    <property type="term" value="P:methylation"/>
    <property type="evidence" value="ECO:0007669"/>
    <property type="project" value="UniProtKB-KW"/>
</dbReference>
<dbReference type="GO" id="GO:0071768">
    <property type="term" value="P:mycolic acid biosynthetic process"/>
    <property type="evidence" value="ECO:0000314"/>
    <property type="project" value="MTBBASE"/>
</dbReference>
<dbReference type="CDD" id="cd02440">
    <property type="entry name" value="AdoMet_MTases"/>
    <property type="match status" value="1"/>
</dbReference>
<dbReference type="FunFam" id="3.40.50.150:FF:000115">
    <property type="entry name" value="Cyclopropane mycolic acid synthase 1"/>
    <property type="match status" value="1"/>
</dbReference>
<dbReference type="Gene3D" id="3.40.50.150">
    <property type="entry name" value="Vaccinia Virus protein VP39"/>
    <property type="match status" value="1"/>
</dbReference>
<dbReference type="InterPro" id="IPR050723">
    <property type="entry name" value="CFA/CMAS"/>
</dbReference>
<dbReference type="InterPro" id="IPR003333">
    <property type="entry name" value="CMAS"/>
</dbReference>
<dbReference type="InterPro" id="IPR047672">
    <property type="entry name" value="CMAS_actinobact"/>
</dbReference>
<dbReference type="InterPro" id="IPR029063">
    <property type="entry name" value="SAM-dependent_MTases_sf"/>
</dbReference>
<dbReference type="NCBIfam" id="NF040660">
    <property type="entry name" value="mycolic_MTase"/>
    <property type="match status" value="1"/>
</dbReference>
<dbReference type="PANTHER" id="PTHR43667">
    <property type="entry name" value="CYCLOPROPANE-FATTY-ACYL-PHOSPHOLIPID SYNTHASE"/>
    <property type="match status" value="1"/>
</dbReference>
<dbReference type="PANTHER" id="PTHR43667:SF1">
    <property type="entry name" value="CYCLOPROPANE-FATTY-ACYL-PHOSPHOLIPID SYNTHASE"/>
    <property type="match status" value="1"/>
</dbReference>
<dbReference type="Pfam" id="PF02353">
    <property type="entry name" value="CMAS"/>
    <property type="match status" value="1"/>
</dbReference>
<dbReference type="PIRSF" id="PIRSF003085">
    <property type="entry name" value="CMAS"/>
    <property type="match status" value="1"/>
</dbReference>
<dbReference type="SUPFAM" id="SSF53335">
    <property type="entry name" value="S-adenosyl-L-methionine-dependent methyltransferases"/>
    <property type="match status" value="1"/>
</dbReference>
<accession>P0CH91</accession>
<accession>L0T4G3</accession>
<accession>O08053</accession>
<accession>P72027</accession>
<accession>Q79FX7</accession>
<keyword id="KW-0444">Lipid biosynthesis</keyword>
<keyword id="KW-0443">Lipid metabolism</keyword>
<keyword id="KW-0489">Methyltransferase</keyword>
<keyword id="KW-1185">Reference proteome</keyword>
<keyword id="KW-0949">S-adenosyl-L-methionine</keyword>
<keyword id="KW-0808">Transferase</keyword>
<name>MMAA3_MYCTU</name>
<protein>
    <recommendedName>
        <fullName>Methoxy mycolic acid synthase MmaA3</fullName>
        <ecNumber>2.1.1.-</ecNumber>
    </recommendedName>
    <alternativeName>
        <fullName>Mycolic acid methyltransferase</fullName>
        <shortName>MA-MT</shortName>
    </alternativeName>
    <alternativeName>
        <fullName>S-adenosylmethionine-dependent methyltransferase</fullName>
        <shortName>AdoMet-MT</shortName>
        <shortName>SAM-MT</shortName>
    </alternativeName>
</protein>
<reference key="1">
    <citation type="journal article" date="1998" name="Nature">
        <title>Deciphering the biology of Mycobacterium tuberculosis from the complete genome sequence.</title>
        <authorList>
            <person name="Cole S.T."/>
            <person name="Brosch R."/>
            <person name="Parkhill J."/>
            <person name="Garnier T."/>
            <person name="Churcher C.M."/>
            <person name="Harris D.E."/>
            <person name="Gordon S.V."/>
            <person name="Eiglmeier K."/>
            <person name="Gas S."/>
            <person name="Barry C.E. III"/>
            <person name="Tekaia F."/>
            <person name="Badcock K."/>
            <person name="Basham D."/>
            <person name="Brown D."/>
            <person name="Chillingworth T."/>
            <person name="Connor R."/>
            <person name="Davies R.M."/>
            <person name="Devlin K."/>
            <person name="Feltwell T."/>
            <person name="Gentles S."/>
            <person name="Hamlin N."/>
            <person name="Holroyd S."/>
            <person name="Hornsby T."/>
            <person name="Jagels K."/>
            <person name="Krogh A."/>
            <person name="McLean J."/>
            <person name="Moule S."/>
            <person name="Murphy L.D."/>
            <person name="Oliver S."/>
            <person name="Osborne J."/>
            <person name="Quail M.A."/>
            <person name="Rajandream M.A."/>
            <person name="Rogers J."/>
            <person name="Rutter S."/>
            <person name="Seeger K."/>
            <person name="Skelton S."/>
            <person name="Squares S."/>
            <person name="Squares R."/>
            <person name="Sulston J.E."/>
            <person name="Taylor K."/>
            <person name="Whitehead S."/>
            <person name="Barrell B.G."/>
        </authorList>
    </citation>
    <scope>NUCLEOTIDE SEQUENCE [LARGE SCALE GENOMIC DNA]</scope>
    <source>
        <strain>ATCC 25618 / H37Rv</strain>
    </source>
</reference>
<reference key="2">
    <citation type="journal article" date="1998" name="Mol. Microbiol.">
        <title>The effect of oxygenated mycolic acid composition on cell wall function and macrophage growth in Mycobacterium tuberculosis.</title>
        <authorList>
            <person name="Yuan Y."/>
            <person name="Zhu Y."/>
            <person name="Crane D.D."/>
            <person name="Barry C.E. III"/>
        </authorList>
    </citation>
    <scope>FUNCTION IN OXYGEN-CONTAINING MYCOLATES BIOSYNTHESIS</scope>
    <source>
        <strain>ATCC 25618 / H37Rv</strain>
    </source>
</reference>
<reference key="3">
    <citation type="journal article" date="2000" name="J. Bacteriol.">
        <title>A point mutation in the mma3 gene is responsible for impaired methoxymycolic acid production in Mycobacterium bovis BCG strains obtained after 1927.</title>
        <authorList>
            <person name="Behr M.A."/>
            <person name="Schroeder B.G."/>
            <person name="Brinkman J.N."/>
            <person name="Slayden R.A."/>
            <person name="Barry C.E. III"/>
        </authorList>
    </citation>
    <scope>FUNCTION IN O-METHYLATED MYCOLIC ACID BIOSYNTHESIS</scope>
    <scope>MUTAGENESIS OF GLY-98</scope>
    <source>
        <strain>ATCC 25618 / H37Rv</strain>
    </source>
</reference>
<reference key="4">
    <citation type="journal article" date="2008" name="BMC Syst. Biol.">
        <title>targetTB: a target identification pipeline for Mycobacterium tuberculosis through an interactome, reactome and genome-scale structural analysis.</title>
        <authorList>
            <person name="Raman K."/>
            <person name="Yeturu K."/>
            <person name="Chandra N."/>
        </authorList>
    </citation>
    <scope>IDENTIFICATION AS A DRUG TARGET [LARGE SCALE ANALYSIS]</scope>
</reference>
<reference key="5">
    <citation type="journal article" date="2011" name="Mol. Cell. Proteomics">
        <title>Proteogenomic analysis of Mycobacterium tuberculosis by high resolution mass spectrometry.</title>
        <authorList>
            <person name="Kelkar D.S."/>
            <person name="Kumar D."/>
            <person name="Kumar P."/>
            <person name="Balakrishnan L."/>
            <person name="Muthusamy B."/>
            <person name="Yadav A.K."/>
            <person name="Shrivastava P."/>
            <person name="Marimuthu A."/>
            <person name="Anand S."/>
            <person name="Sundaram H."/>
            <person name="Kingsbury R."/>
            <person name="Harsha H.C."/>
            <person name="Nair B."/>
            <person name="Prasad T.S."/>
            <person name="Chauhan D.S."/>
            <person name="Katoch K."/>
            <person name="Katoch V.M."/>
            <person name="Kumar P."/>
            <person name="Chaerkady R."/>
            <person name="Ramachandran S."/>
            <person name="Dash D."/>
            <person name="Pandey A."/>
        </authorList>
    </citation>
    <scope>IDENTIFICATION BY MASS SPECTROMETRY [LARGE SCALE ANALYSIS]</scope>
    <source>
        <strain>ATCC 25618 / H37Rv</strain>
    </source>
</reference>
<organism>
    <name type="scientific">Mycobacterium tuberculosis (strain ATCC 25618 / H37Rv)</name>
    <dbReference type="NCBI Taxonomy" id="83332"/>
    <lineage>
        <taxon>Bacteria</taxon>
        <taxon>Bacillati</taxon>
        <taxon>Actinomycetota</taxon>
        <taxon>Actinomycetes</taxon>
        <taxon>Mycobacteriales</taxon>
        <taxon>Mycobacteriaceae</taxon>
        <taxon>Mycobacterium</taxon>
        <taxon>Mycobacterium tuberculosis complex</taxon>
    </lineage>
</organism>
<proteinExistence type="evidence at protein level"/>
<gene>
    <name type="primary">mmaA3</name>
    <name type="synonym">mma3</name>
    <name type="ordered locus">Rv0643c</name>
</gene>